<gene>
    <name evidence="1" type="primary">carB</name>
    <name type="synonym">pyrA</name>
    <name type="ordered locus">SCO1483</name>
    <name type="ORF">SC9C5.07c</name>
</gene>
<keyword id="KW-0028">Amino-acid biosynthesis</keyword>
<keyword id="KW-0055">Arginine biosynthesis</keyword>
<keyword id="KW-0067">ATP-binding</keyword>
<keyword id="KW-0436">Ligase</keyword>
<keyword id="KW-0460">Magnesium</keyword>
<keyword id="KW-0464">Manganese</keyword>
<keyword id="KW-0479">Metal-binding</keyword>
<keyword id="KW-0547">Nucleotide-binding</keyword>
<keyword id="KW-0665">Pyrimidine biosynthesis</keyword>
<keyword id="KW-1185">Reference proteome</keyword>
<keyword id="KW-0677">Repeat</keyword>
<feature type="chain" id="PRO_0000145050" description="Carbamoyl phosphate synthase large chain">
    <location>
        <begin position="1"/>
        <end position="1102"/>
    </location>
</feature>
<feature type="domain" description="ATP-grasp 1" evidence="1">
    <location>
        <begin position="137"/>
        <end position="334"/>
    </location>
</feature>
<feature type="domain" description="ATP-grasp 2" evidence="1">
    <location>
        <begin position="682"/>
        <end position="873"/>
    </location>
</feature>
<feature type="domain" description="MGS-like" evidence="1">
    <location>
        <begin position="955"/>
        <end position="1100"/>
    </location>
</feature>
<feature type="region of interest" description="Carboxyphosphate synthetic domain" evidence="1">
    <location>
        <begin position="1"/>
        <end position="408"/>
    </location>
</feature>
<feature type="region of interest" description="Oligomerization domain" evidence="1">
    <location>
        <begin position="409"/>
        <end position="551"/>
    </location>
</feature>
<feature type="region of interest" description="Carbamoyl phosphate synthetic domain" evidence="1">
    <location>
        <begin position="552"/>
        <end position="954"/>
    </location>
</feature>
<feature type="region of interest" description="Allosteric domain" evidence="1">
    <location>
        <begin position="955"/>
        <end position="1102"/>
    </location>
</feature>
<feature type="binding site" evidence="1">
    <location>
        <position position="129"/>
    </location>
    <ligand>
        <name>ATP</name>
        <dbReference type="ChEBI" id="CHEBI:30616"/>
        <label>1</label>
    </ligand>
</feature>
<feature type="binding site" evidence="1">
    <location>
        <position position="175"/>
    </location>
    <ligand>
        <name>ATP</name>
        <dbReference type="ChEBI" id="CHEBI:30616"/>
        <label>1</label>
    </ligand>
</feature>
<feature type="binding site" evidence="1">
    <location>
        <position position="181"/>
    </location>
    <ligand>
        <name>ATP</name>
        <dbReference type="ChEBI" id="CHEBI:30616"/>
        <label>1</label>
    </ligand>
</feature>
<feature type="binding site" evidence="1">
    <location>
        <position position="182"/>
    </location>
    <ligand>
        <name>ATP</name>
        <dbReference type="ChEBI" id="CHEBI:30616"/>
        <label>1</label>
    </ligand>
</feature>
<feature type="binding site" evidence="1">
    <location>
        <position position="214"/>
    </location>
    <ligand>
        <name>ATP</name>
        <dbReference type="ChEBI" id="CHEBI:30616"/>
        <label>1</label>
    </ligand>
</feature>
<feature type="binding site" evidence="1">
    <location>
        <position position="216"/>
    </location>
    <ligand>
        <name>ATP</name>
        <dbReference type="ChEBI" id="CHEBI:30616"/>
        <label>1</label>
    </ligand>
</feature>
<feature type="binding site" evidence="1">
    <location>
        <position position="221"/>
    </location>
    <ligand>
        <name>ATP</name>
        <dbReference type="ChEBI" id="CHEBI:30616"/>
        <label>1</label>
    </ligand>
</feature>
<feature type="binding site" evidence="1">
    <location>
        <position position="247"/>
    </location>
    <ligand>
        <name>ATP</name>
        <dbReference type="ChEBI" id="CHEBI:30616"/>
        <label>1</label>
    </ligand>
</feature>
<feature type="binding site" evidence="1">
    <location>
        <position position="248"/>
    </location>
    <ligand>
        <name>ATP</name>
        <dbReference type="ChEBI" id="CHEBI:30616"/>
        <label>1</label>
    </ligand>
</feature>
<feature type="binding site" evidence="1">
    <location>
        <position position="249"/>
    </location>
    <ligand>
        <name>ATP</name>
        <dbReference type="ChEBI" id="CHEBI:30616"/>
        <label>1</label>
    </ligand>
</feature>
<feature type="binding site" evidence="1">
    <location>
        <position position="291"/>
    </location>
    <ligand>
        <name>ATP</name>
        <dbReference type="ChEBI" id="CHEBI:30616"/>
        <label>1</label>
    </ligand>
</feature>
<feature type="binding site" evidence="1">
    <location>
        <position position="291"/>
    </location>
    <ligand>
        <name>Mg(2+)</name>
        <dbReference type="ChEBI" id="CHEBI:18420"/>
        <label>1</label>
    </ligand>
</feature>
<feature type="binding site" evidence="1">
    <location>
        <position position="291"/>
    </location>
    <ligand>
        <name>Mn(2+)</name>
        <dbReference type="ChEBI" id="CHEBI:29035"/>
        <label>1</label>
    </ligand>
</feature>
<feature type="binding site" evidence="1">
    <location>
        <position position="305"/>
    </location>
    <ligand>
        <name>ATP</name>
        <dbReference type="ChEBI" id="CHEBI:30616"/>
        <label>1</label>
    </ligand>
</feature>
<feature type="binding site" evidence="1">
    <location>
        <position position="305"/>
    </location>
    <ligand>
        <name>Mg(2+)</name>
        <dbReference type="ChEBI" id="CHEBI:18420"/>
        <label>1</label>
    </ligand>
</feature>
<feature type="binding site" evidence="1">
    <location>
        <position position="305"/>
    </location>
    <ligand>
        <name>Mg(2+)</name>
        <dbReference type="ChEBI" id="CHEBI:18420"/>
        <label>2</label>
    </ligand>
</feature>
<feature type="binding site" evidence="1">
    <location>
        <position position="305"/>
    </location>
    <ligand>
        <name>Mn(2+)</name>
        <dbReference type="ChEBI" id="CHEBI:29035"/>
        <label>1</label>
    </ligand>
</feature>
<feature type="binding site" evidence="1">
    <location>
        <position position="305"/>
    </location>
    <ligand>
        <name>Mn(2+)</name>
        <dbReference type="ChEBI" id="CHEBI:29035"/>
        <label>2</label>
    </ligand>
</feature>
<feature type="binding site" evidence="1">
    <location>
        <position position="307"/>
    </location>
    <ligand>
        <name>Mg(2+)</name>
        <dbReference type="ChEBI" id="CHEBI:18420"/>
        <label>2</label>
    </ligand>
</feature>
<feature type="binding site" evidence="1">
    <location>
        <position position="307"/>
    </location>
    <ligand>
        <name>Mn(2+)</name>
        <dbReference type="ChEBI" id="CHEBI:29035"/>
        <label>2</label>
    </ligand>
</feature>
<feature type="binding site" evidence="1">
    <location>
        <position position="718"/>
    </location>
    <ligand>
        <name>ATP</name>
        <dbReference type="ChEBI" id="CHEBI:30616"/>
        <label>2</label>
    </ligand>
</feature>
<feature type="binding site" evidence="1">
    <location>
        <position position="757"/>
    </location>
    <ligand>
        <name>ATP</name>
        <dbReference type="ChEBI" id="CHEBI:30616"/>
        <label>2</label>
    </ligand>
</feature>
<feature type="binding site" evidence="1">
    <location>
        <position position="759"/>
    </location>
    <ligand>
        <name>ATP</name>
        <dbReference type="ChEBI" id="CHEBI:30616"/>
        <label>2</label>
    </ligand>
</feature>
<feature type="binding site" evidence="1">
    <location>
        <position position="764"/>
    </location>
    <ligand>
        <name>ATP</name>
        <dbReference type="ChEBI" id="CHEBI:30616"/>
        <label>2</label>
    </ligand>
</feature>
<feature type="binding site" evidence="1">
    <location>
        <position position="789"/>
    </location>
    <ligand>
        <name>ATP</name>
        <dbReference type="ChEBI" id="CHEBI:30616"/>
        <label>2</label>
    </ligand>
</feature>
<feature type="binding site" evidence="1">
    <location>
        <position position="790"/>
    </location>
    <ligand>
        <name>ATP</name>
        <dbReference type="ChEBI" id="CHEBI:30616"/>
        <label>2</label>
    </ligand>
</feature>
<feature type="binding site" evidence="1">
    <location>
        <position position="791"/>
    </location>
    <ligand>
        <name>ATP</name>
        <dbReference type="ChEBI" id="CHEBI:30616"/>
        <label>2</label>
    </ligand>
</feature>
<feature type="binding site" evidence="1">
    <location>
        <position position="792"/>
    </location>
    <ligand>
        <name>ATP</name>
        <dbReference type="ChEBI" id="CHEBI:30616"/>
        <label>2</label>
    </ligand>
</feature>
<feature type="binding site" evidence="1">
    <location>
        <position position="832"/>
    </location>
    <ligand>
        <name>ATP</name>
        <dbReference type="ChEBI" id="CHEBI:30616"/>
        <label>2</label>
    </ligand>
</feature>
<feature type="binding site" evidence="1">
    <location>
        <position position="832"/>
    </location>
    <ligand>
        <name>Mg(2+)</name>
        <dbReference type="ChEBI" id="CHEBI:18420"/>
        <label>3</label>
    </ligand>
</feature>
<feature type="binding site" evidence="1">
    <location>
        <position position="832"/>
    </location>
    <ligand>
        <name>Mn(2+)</name>
        <dbReference type="ChEBI" id="CHEBI:29035"/>
        <label>3</label>
    </ligand>
</feature>
<feature type="binding site" evidence="1">
    <location>
        <position position="844"/>
    </location>
    <ligand>
        <name>ATP</name>
        <dbReference type="ChEBI" id="CHEBI:30616"/>
        <label>2</label>
    </ligand>
</feature>
<feature type="binding site" evidence="1">
    <location>
        <position position="844"/>
    </location>
    <ligand>
        <name>Mg(2+)</name>
        <dbReference type="ChEBI" id="CHEBI:18420"/>
        <label>3</label>
    </ligand>
</feature>
<feature type="binding site" evidence="1">
    <location>
        <position position="844"/>
    </location>
    <ligand>
        <name>Mg(2+)</name>
        <dbReference type="ChEBI" id="CHEBI:18420"/>
        <label>4</label>
    </ligand>
</feature>
<feature type="binding site" evidence="1">
    <location>
        <position position="844"/>
    </location>
    <ligand>
        <name>Mn(2+)</name>
        <dbReference type="ChEBI" id="CHEBI:29035"/>
        <label>3</label>
    </ligand>
</feature>
<feature type="binding site" evidence="1">
    <location>
        <position position="844"/>
    </location>
    <ligand>
        <name>Mn(2+)</name>
        <dbReference type="ChEBI" id="CHEBI:29035"/>
        <label>4</label>
    </ligand>
</feature>
<feature type="binding site" evidence="1">
    <location>
        <position position="846"/>
    </location>
    <ligand>
        <name>Mg(2+)</name>
        <dbReference type="ChEBI" id="CHEBI:18420"/>
        <label>4</label>
    </ligand>
</feature>
<feature type="binding site" evidence="1">
    <location>
        <position position="846"/>
    </location>
    <ligand>
        <name>Mn(2+)</name>
        <dbReference type="ChEBI" id="CHEBI:29035"/>
        <label>4</label>
    </ligand>
</feature>
<accession>Q9KXR6</accession>
<protein>
    <recommendedName>
        <fullName evidence="1">Carbamoyl phosphate synthase large chain</fullName>
        <ecNumber evidence="1">6.3.4.16</ecNumber>
        <ecNumber evidence="1">6.3.5.5</ecNumber>
    </recommendedName>
    <alternativeName>
        <fullName evidence="1">Carbamoyl phosphate synthetase ammonia chain</fullName>
    </alternativeName>
</protein>
<dbReference type="EC" id="6.3.4.16" evidence="1"/>
<dbReference type="EC" id="6.3.5.5" evidence="1"/>
<dbReference type="EMBL" id="AL939109">
    <property type="protein sequence ID" value="CAB93363.1"/>
    <property type="molecule type" value="Genomic_DNA"/>
</dbReference>
<dbReference type="RefSeq" id="NP_625763.1">
    <property type="nucleotide sequence ID" value="NC_003888.3"/>
</dbReference>
<dbReference type="RefSeq" id="WP_003977343.1">
    <property type="nucleotide sequence ID" value="NZ_VNID01000021.1"/>
</dbReference>
<dbReference type="SMR" id="Q9KXR6"/>
<dbReference type="FunCoup" id="Q9KXR6">
    <property type="interactions" value="473"/>
</dbReference>
<dbReference type="STRING" id="100226.gene:17759069"/>
<dbReference type="PaxDb" id="100226-SCO1483"/>
<dbReference type="KEGG" id="sco:SCO1483"/>
<dbReference type="PATRIC" id="fig|100226.15.peg.1492"/>
<dbReference type="eggNOG" id="COG0458">
    <property type="taxonomic scope" value="Bacteria"/>
</dbReference>
<dbReference type="HOGENOM" id="CLU_000513_1_0_11"/>
<dbReference type="InParanoid" id="Q9KXR6"/>
<dbReference type="OrthoDB" id="9804197at2"/>
<dbReference type="PhylomeDB" id="Q9KXR6"/>
<dbReference type="UniPathway" id="UPA00068">
    <property type="reaction ID" value="UER00171"/>
</dbReference>
<dbReference type="UniPathway" id="UPA00070">
    <property type="reaction ID" value="UER00115"/>
</dbReference>
<dbReference type="Proteomes" id="UP000001973">
    <property type="component" value="Chromosome"/>
</dbReference>
<dbReference type="GO" id="GO:0005737">
    <property type="term" value="C:cytoplasm"/>
    <property type="evidence" value="ECO:0000318"/>
    <property type="project" value="GO_Central"/>
</dbReference>
<dbReference type="GO" id="GO:0005524">
    <property type="term" value="F:ATP binding"/>
    <property type="evidence" value="ECO:0007669"/>
    <property type="project" value="UniProtKB-UniRule"/>
</dbReference>
<dbReference type="GO" id="GO:0004087">
    <property type="term" value="F:carbamoyl-phosphate synthase (ammonia) activity"/>
    <property type="evidence" value="ECO:0007669"/>
    <property type="project" value="RHEA"/>
</dbReference>
<dbReference type="GO" id="GO:0004088">
    <property type="term" value="F:carbamoyl-phosphate synthase (glutamine-hydrolyzing) activity"/>
    <property type="evidence" value="ECO:0007669"/>
    <property type="project" value="UniProtKB-UniRule"/>
</dbReference>
<dbReference type="GO" id="GO:0046872">
    <property type="term" value="F:metal ion binding"/>
    <property type="evidence" value="ECO:0007669"/>
    <property type="project" value="UniProtKB-KW"/>
</dbReference>
<dbReference type="GO" id="GO:0044205">
    <property type="term" value="P:'de novo' UMP biosynthetic process"/>
    <property type="evidence" value="ECO:0007669"/>
    <property type="project" value="UniProtKB-UniRule"/>
</dbReference>
<dbReference type="GO" id="GO:0006541">
    <property type="term" value="P:glutamine metabolic process"/>
    <property type="evidence" value="ECO:0000318"/>
    <property type="project" value="GO_Central"/>
</dbReference>
<dbReference type="GO" id="GO:0006526">
    <property type="term" value="P:L-arginine biosynthetic process"/>
    <property type="evidence" value="ECO:0007669"/>
    <property type="project" value="UniProtKB-UniRule"/>
</dbReference>
<dbReference type="CDD" id="cd01424">
    <property type="entry name" value="MGS_CPS_II"/>
    <property type="match status" value="1"/>
</dbReference>
<dbReference type="FunFam" id="1.10.1030.10:FF:000002">
    <property type="entry name" value="Carbamoyl-phosphate synthase large chain"/>
    <property type="match status" value="1"/>
</dbReference>
<dbReference type="FunFam" id="3.30.1490.20:FF:000001">
    <property type="entry name" value="Carbamoyl-phosphate synthase large chain"/>
    <property type="match status" value="1"/>
</dbReference>
<dbReference type="FunFam" id="3.30.470.20:FF:000007">
    <property type="entry name" value="Carbamoyl-phosphate synthase large chain"/>
    <property type="match status" value="1"/>
</dbReference>
<dbReference type="FunFam" id="3.30.470.20:FF:000014">
    <property type="entry name" value="Carbamoyl-phosphate synthase large chain"/>
    <property type="match status" value="1"/>
</dbReference>
<dbReference type="FunFam" id="3.40.50.1380:FF:000007">
    <property type="entry name" value="Carbamoyl-phosphate synthase large chain"/>
    <property type="match status" value="1"/>
</dbReference>
<dbReference type="FunFam" id="3.40.50.20:FF:000001">
    <property type="entry name" value="Carbamoyl-phosphate synthase large chain"/>
    <property type="match status" value="1"/>
</dbReference>
<dbReference type="FunFam" id="3.40.50.20:FF:000003">
    <property type="entry name" value="Carbamoyl-phosphate synthase large chain"/>
    <property type="match status" value="1"/>
</dbReference>
<dbReference type="Gene3D" id="3.40.50.20">
    <property type="match status" value="2"/>
</dbReference>
<dbReference type="Gene3D" id="3.30.1490.20">
    <property type="entry name" value="ATP-grasp fold, A domain"/>
    <property type="match status" value="1"/>
</dbReference>
<dbReference type="Gene3D" id="3.30.470.20">
    <property type="entry name" value="ATP-grasp fold, B domain"/>
    <property type="match status" value="2"/>
</dbReference>
<dbReference type="Gene3D" id="1.10.1030.10">
    <property type="entry name" value="Carbamoyl-phosphate synthetase, large subunit oligomerisation domain"/>
    <property type="match status" value="1"/>
</dbReference>
<dbReference type="Gene3D" id="3.40.50.1380">
    <property type="entry name" value="Methylglyoxal synthase-like domain"/>
    <property type="match status" value="1"/>
</dbReference>
<dbReference type="HAMAP" id="MF_01210_B">
    <property type="entry name" value="CPSase_L_chain_B"/>
    <property type="match status" value="1"/>
</dbReference>
<dbReference type="InterPro" id="IPR011761">
    <property type="entry name" value="ATP-grasp"/>
</dbReference>
<dbReference type="InterPro" id="IPR013815">
    <property type="entry name" value="ATP_grasp_subdomain_1"/>
</dbReference>
<dbReference type="InterPro" id="IPR006275">
    <property type="entry name" value="CarbamoylP_synth_lsu"/>
</dbReference>
<dbReference type="InterPro" id="IPR005480">
    <property type="entry name" value="CarbamoylP_synth_lsu_oligo"/>
</dbReference>
<dbReference type="InterPro" id="IPR036897">
    <property type="entry name" value="CarbamoylP_synth_lsu_oligo_sf"/>
</dbReference>
<dbReference type="InterPro" id="IPR005479">
    <property type="entry name" value="CbamoylP_synth_lsu-like_ATP-bd"/>
</dbReference>
<dbReference type="InterPro" id="IPR005483">
    <property type="entry name" value="CbamoylP_synth_lsu_CPSase_dom"/>
</dbReference>
<dbReference type="InterPro" id="IPR011607">
    <property type="entry name" value="MGS-like_dom"/>
</dbReference>
<dbReference type="InterPro" id="IPR036914">
    <property type="entry name" value="MGS-like_dom_sf"/>
</dbReference>
<dbReference type="InterPro" id="IPR033937">
    <property type="entry name" value="MGS_CPS_CarB"/>
</dbReference>
<dbReference type="InterPro" id="IPR016185">
    <property type="entry name" value="PreATP-grasp_dom_sf"/>
</dbReference>
<dbReference type="NCBIfam" id="TIGR01369">
    <property type="entry name" value="CPSaseII_lrg"/>
    <property type="match status" value="1"/>
</dbReference>
<dbReference type="NCBIfam" id="NF003671">
    <property type="entry name" value="PRK05294.1"/>
    <property type="match status" value="1"/>
</dbReference>
<dbReference type="NCBIfam" id="NF009455">
    <property type="entry name" value="PRK12815.1"/>
    <property type="match status" value="1"/>
</dbReference>
<dbReference type="PANTHER" id="PTHR11405:SF53">
    <property type="entry name" value="CARBAMOYL-PHOSPHATE SYNTHASE [AMMONIA], MITOCHONDRIAL"/>
    <property type="match status" value="1"/>
</dbReference>
<dbReference type="PANTHER" id="PTHR11405">
    <property type="entry name" value="CARBAMOYLTRANSFERASE FAMILY MEMBER"/>
    <property type="match status" value="1"/>
</dbReference>
<dbReference type="Pfam" id="PF02786">
    <property type="entry name" value="CPSase_L_D2"/>
    <property type="match status" value="2"/>
</dbReference>
<dbReference type="Pfam" id="PF02787">
    <property type="entry name" value="CPSase_L_D3"/>
    <property type="match status" value="1"/>
</dbReference>
<dbReference type="Pfam" id="PF02142">
    <property type="entry name" value="MGS"/>
    <property type="match status" value="1"/>
</dbReference>
<dbReference type="PRINTS" id="PR00098">
    <property type="entry name" value="CPSASE"/>
</dbReference>
<dbReference type="SMART" id="SM01096">
    <property type="entry name" value="CPSase_L_D3"/>
    <property type="match status" value="1"/>
</dbReference>
<dbReference type="SMART" id="SM00851">
    <property type="entry name" value="MGS"/>
    <property type="match status" value="1"/>
</dbReference>
<dbReference type="SUPFAM" id="SSF48108">
    <property type="entry name" value="Carbamoyl phosphate synthetase, large subunit connection domain"/>
    <property type="match status" value="1"/>
</dbReference>
<dbReference type="SUPFAM" id="SSF56059">
    <property type="entry name" value="Glutathione synthetase ATP-binding domain-like"/>
    <property type="match status" value="2"/>
</dbReference>
<dbReference type="SUPFAM" id="SSF52335">
    <property type="entry name" value="Methylglyoxal synthase-like"/>
    <property type="match status" value="1"/>
</dbReference>
<dbReference type="SUPFAM" id="SSF52440">
    <property type="entry name" value="PreATP-grasp domain"/>
    <property type="match status" value="2"/>
</dbReference>
<dbReference type="PROSITE" id="PS50975">
    <property type="entry name" value="ATP_GRASP"/>
    <property type="match status" value="2"/>
</dbReference>
<dbReference type="PROSITE" id="PS00866">
    <property type="entry name" value="CPSASE_1"/>
    <property type="match status" value="2"/>
</dbReference>
<dbReference type="PROSITE" id="PS00867">
    <property type="entry name" value="CPSASE_2"/>
    <property type="match status" value="2"/>
</dbReference>
<dbReference type="PROSITE" id="PS51855">
    <property type="entry name" value="MGS"/>
    <property type="match status" value="1"/>
</dbReference>
<proteinExistence type="inferred from homology"/>
<evidence type="ECO:0000255" key="1">
    <source>
        <dbReference type="HAMAP-Rule" id="MF_01210"/>
    </source>
</evidence>
<name>CARB_STRCO</name>
<organism>
    <name type="scientific">Streptomyces coelicolor (strain ATCC BAA-471 / A3(2) / M145)</name>
    <dbReference type="NCBI Taxonomy" id="100226"/>
    <lineage>
        <taxon>Bacteria</taxon>
        <taxon>Bacillati</taxon>
        <taxon>Actinomycetota</taxon>
        <taxon>Actinomycetes</taxon>
        <taxon>Kitasatosporales</taxon>
        <taxon>Streptomycetaceae</taxon>
        <taxon>Streptomyces</taxon>
        <taxon>Streptomyces albidoflavus group</taxon>
    </lineage>
</organism>
<sequence length="1102" mass="117909">MPKRTDIQSVLVIGSGPIVIGQAAEFDYSGTQACRVLKAEGLRVVLVNSNPATIMTDPEIADATYVEPITPEFVEKIIAKERPDALLPTLGGQTALNTAISLHGNGVLEKYGVELIGANVEAINKGEDRDLFKEVVEEVRKKIGHGESARSYICHSMDDVLKGVDALGGYPVVVRPSFTMGGAGSGFAHDEDELRRIAGQGLTLSPTTEVLLEESILGWKEYELELMRDKNDNVVVVCSIENFDPMGVHTGDSITVAPAMTLTDREYQTLRDVGIAIIREVGVDTGGCNIQFAVNPEDGRVIVIEMNPRVSRSSALASKATGFPIAKIAAKLAVGYTLDEIPNDITQETPASFEPTLDYVVVKAPRFAFEKFPSADSTLTTTMKSVGEAMAIGRNFTEAFQKALRSLEKKGSQFTFVGEPGDKDELLREAVRPTDGRINAVMQAIRAGATPEEVFDATKIDPWFVDQLFLIKEIADEIAESRELTADLLTEAKRHGFSDQQIAEISGLGEDVVRQVRHALGVRPVYKTVDTCAAEFAARTPYFYSSYDEESEVAPREKPAVIILGSGPNRIGQGIEFDYSCVHASFALSDAGYETVMVNCNPETVSTDYDTSDRLYFEPLTLEDVLEIVHAEQQAGPVAGVIVQLGGQTPLGLSQALKDNGVPVVGTSPEAIHAAEDRGAFGRVLAEAGLPAPKHGTATTFGEAKAIADEIGYPVLVRPSYVLGGRGMEIVYDETRLEAYIAESTEISPSRPVLVDRFLDDAIEIDVDALYDGEELYLGGVMEHIEEAGIHSGDSACALPPITLGGFDIKRLRASTEGIAKGVGVRGLINIQFALAGDILYVLEANPRASRTVPFTSKATAVPLAKAAARISLGATIAELRAEGLLPALGDGGTLPLDAPISVKEAVMPWSRFRDIHGRGVDTVLGPEMRSTGEVMGIDSVFGTAYAKSQAGAYGPLPTKGRAFISVANRDKRSMIFPARELVAHGFELMATSGTAEVLKRNGINATVVRKQSEGTGPNGEKTIVQLIHDGEVDLIVNTPYGTSGRLDGYDIRTAAVARSVPCLTTVQALAAAVQGIDALNHGDVGVRSLQEHAAFLIAARD</sequence>
<reference key="1">
    <citation type="journal article" date="2002" name="Nature">
        <title>Complete genome sequence of the model actinomycete Streptomyces coelicolor A3(2).</title>
        <authorList>
            <person name="Bentley S.D."/>
            <person name="Chater K.F."/>
            <person name="Cerdeno-Tarraga A.-M."/>
            <person name="Challis G.L."/>
            <person name="Thomson N.R."/>
            <person name="James K.D."/>
            <person name="Harris D.E."/>
            <person name="Quail M.A."/>
            <person name="Kieser H."/>
            <person name="Harper D."/>
            <person name="Bateman A."/>
            <person name="Brown S."/>
            <person name="Chandra G."/>
            <person name="Chen C.W."/>
            <person name="Collins M."/>
            <person name="Cronin A."/>
            <person name="Fraser A."/>
            <person name="Goble A."/>
            <person name="Hidalgo J."/>
            <person name="Hornsby T."/>
            <person name="Howarth S."/>
            <person name="Huang C.-H."/>
            <person name="Kieser T."/>
            <person name="Larke L."/>
            <person name="Murphy L.D."/>
            <person name="Oliver K."/>
            <person name="O'Neil S."/>
            <person name="Rabbinowitsch E."/>
            <person name="Rajandream M.A."/>
            <person name="Rutherford K.M."/>
            <person name="Rutter S."/>
            <person name="Seeger K."/>
            <person name="Saunders D."/>
            <person name="Sharp S."/>
            <person name="Squares R."/>
            <person name="Squares S."/>
            <person name="Taylor K."/>
            <person name="Warren T."/>
            <person name="Wietzorrek A."/>
            <person name="Woodward J.R."/>
            <person name="Barrell B.G."/>
            <person name="Parkhill J."/>
            <person name="Hopwood D.A."/>
        </authorList>
    </citation>
    <scope>NUCLEOTIDE SEQUENCE [LARGE SCALE GENOMIC DNA]</scope>
    <source>
        <strain>ATCC BAA-471 / A3(2) / M145</strain>
    </source>
</reference>
<comment type="function">
    <text evidence="1">Large subunit of the glutamine-dependent carbamoyl phosphate synthetase (CPSase). CPSase catalyzes the formation of carbamoyl phosphate from the ammonia moiety of glutamine, carbonate, and phosphate donated by ATP, constituting the first step of 2 biosynthetic pathways, one leading to arginine and/or urea and the other to pyrimidine nucleotides. The large subunit (synthetase) binds the substrates ammonia (free or transferred from glutamine from the small subunit), hydrogencarbonate and ATP and carries out an ATP-coupled ligase reaction, activating hydrogencarbonate by forming carboxy phosphate which reacts with ammonia to form carbamoyl phosphate.</text>
</comment>
<comment type="catalytic activity">
    <reaction evidence="1">
        <text>hydrogencarbonate + L-glutamine + 2 ATP + H2O = carbamoyl phosphate + L-glutamate + 2 ADP + phosphate + 2 H(+)</text>
        <dbReference type="Rhea" id="RHEA:18633"/>
        <dbReference type="ChEBI" id="CHEBI:15377"/>
        <dbReference type="ChEBI" id="CHEBI:15378"/>
        <dbReference type="ChEBI" id="CHEBI:17544"/>
        <dbReference type="ChEBI" id="CHEBI:29985"/>
        <dbReference type="ChEBI" id="CHEBI:30616"/>
        <dbReference type="ChEBI" id="CHEBI:43474"/>
        <dbReference type="ChEBI" id="CHEBI:58228"/>
        <dbReference type="ChEBI" id="CHEBI:58359"/>
        <dbReference type="ChEBI" id="CHEBI:456216"/>
        <dbReference type="EC" id="6.3.5.5"/>
    </reaction>
</comment>
<comment type="catalytic activity">
    <molecule>Carbamoyl phosphate synthase large chain</molecule>
    <reaction evidence="1">
        <text>hydrogencarbonate + NH4(+) + 2 ATP = carbamoyl phosphate + 2 ADP + phosphate + 2 H(+)</text>
        <dbReference type="Rhea" id="RHEA:18029"/>
        <dbReference type="ChEBI" id="CHEBI:15378"/>
        <dbReference type="ChEBI" id="CHEBI:17544"/>
        <dbReference type="ChEBI" id="CHEBI:28938"/>
        <dbReference type="ChEBI" id="CHEBI:30616"/>
        <dbReference type="ChEBI" id="CHEBI:43474"/>
        <dbReference type="ChEBI" id="CHEBI:58228"/>
        <dbReference type="ChEBI" id="CHEBI:456216"/>
        <dbReference type="EC" id="6.3.4.16"/>
    </reaction>
</comment>
<comment type="cofactor">
    <cofactor evidence="1">
        <name>Mg(2+)</name>
        <dbReference type="ChEBI" id="CHEBI:18420"/>
    </cofactor>
    <cofactor evidence="1">
        <name>Mn(2+)</name>
        <dbReference type="ChEBI" id="CHEBI:29035"/>
    </cofactor>
    <text evidence="1">Binds 4 Mg(2+) or Mn(2+) ions per subunit.</text>
</comment>
<comment type="pathway">
    <text evidence="1">Amino-acid biosynthesis; L-arginine biosynthesis; carbamoyl phosphate from bicarbonate: step 1/1.</text>
</comment>
<comment type="pathway">
    <text evidence="1">Pyrimidine metabolism; UMP biosynthesis via de novo pathway; (S)-dihydroorotate from bicarbonate: step 1/3.</text>
</comment>
<comment type="subunit">
    <text evidence="1">Composed of two chains; the small (or glutamine) chain promotes the hydrolysis of glutamine to ammonia, which is used by the large (or ammonia) chain to synthesize carbamoyl phosphate. Tetramer of heterodimers (alpha,beta)4.</text>
</comment>
<comment type="domain">
    <text evidence="1">The large subunit is composed of 2 ATP-grasp domains that are involved in binding the 2 ATP molecules needed for carbamoyl phosphate synthesis. The N-terminal ATP-grasp domain (referred to as the carboxyphosphate synthetic component) catalyzes the ATP-dependent phosphorylation of hydrogencarbonate to carboxyphosphate and the subsequent nucleophilic attack by ammonia to form a carbamate intermediate. The C-terminal ATP-grasp domain (referred to as the carbamoyl phosphate synthetic component) then catalyzes the phosphorylation of carbamate with the second ATP to form the end product carbamoyl phosphate. The reactive and unstable enzyme intermediates are sequentially channeled from one active site to the next through the interior of the protein over a distance of at least 96 A.</text>
</comment>
<comment type="similarity">
    <text evidence="1">Belongs to the CarB family.</text>
</comment>